<reference key="1">
    <citation type="submission" date="2002-04" db="EMBL/GenBank/DDBJ databases">
        <title>Isolation and characterization of cDNA for macaque neurological disease genes.</title>
        <authorList>
            <person name="Kusuda J."/>
            <person name="Osada N."/>
            <person name="Hida M."/>
            <person name="Sugano S."/>
            <person name="Hashimoto K."/>
        </authorList>
    </citation>
    <scope>NUCLEOTIDE SEQUENCE [LARGE SCALE MRNA]</scope>
    <source>
        <tissue>Parietal cortex</tissue>
    </source>
</reference>
<reference key="2">
    <citation type="journal article" date="2011" name="Nat. Biotechnol.">
        <title>Genome sequencing and comparison of two nonhuman primate animal models, the cynomolgus and Chinese rhesus macaques.</title>
        <authorList>
            <person name="Yan G."/>
            <person name="Zhang G."/>
            <person name="Fang X."/>
            <person name="Zhang Y."/>
            <person name="Li C."/>
            <person name="Ling F."/>
            <person name="Cooper D.N."/>
            <person name="Li Q."/>
            <person name="Li Y."/>
            <person name="van Gool A.J."/>
            <person name="Du H."/>
            <person name="Chen J."/>
            <person name="Chen R."/>
            <person name="Zhang P."/>
            <person name="Huang Z."/>
            <person name="Thompson J.R."/>
            <person name="Meng Y."/>
            <person name="Bai Y."/>
            <person name="Wang J."/>
            <person name="Zhuo M."/>
            <person name="Wang T."/>
            <person name="Huang Y."/>
            <person name="Wei L."/>
            <person name="Li J."/>
            <person name="Wang Z."/>
            <person name="Hu H."/>
            <person name="Yang P."/>
            <person name="Le L."/>
            <person name="Stenson P.D."/>
            <person name="Li B."/>
            <person name="Liu X."/>
            <person name="Ball E.V."/>
            <person name="An N."/>
            <person name="Huang Q."/>
            <person name="Zhang Y."/>
            <person name="Fan W."/>
            <person name="Zhang X."/>
            <person name="Li Y."/>
            <person name="Wang W."/>
            <person name="Katze M.G."/>
            <person name="Su B."/>
            <person name="Nielsen R."/>
            <person name="Yang H."/>
            <person name="Wang J."/>
            <person name="Wang X."/>
            <person name="Wang J."/>
        </authorList>
    </citation>
    <scope>NUCLEOTIDE SEQUENCE [LARGE SCALE GENOMIC DNA]</scope>
</reference>
<evidence type="ECO:0000250" key="1"/>
<evidence type="ECO:0000250" key="2">
    <source>
        <dbReference type="UniProtKB" id="D3ZYW7"/>
    </source>
</evidence>
<evidence type="ECO:0000250" key="3">
    <source>
        <dbReference type="UniProtKB" id="Q16595"/>
    </source>
</evidence>
<evidence type="ECO:0000250" key="4">
    <source>
        <dbReference type="UniProtKB" id="Q9H1K1"/>
    </source>
</evidence>
<evidence type="ECO:0000305" key="5"/>
<keyword id="KW-0963">Cytoplasm</keyword>
<keyword id="KW-0350">Heme biosynthesis</keyword>
<keyword id="KW-0406">Ion transport</keyword>
<keyword id="KW-0408">Iron</keyword>
<keyword id="KW-0409">Iron storage</keyword>
<keyword id="KW-0410">Iron transport</keyword>
<keyword id="KW-0496">Mitochondrion</keyword>
<keyword id="KW-0560">Oxidoreductase</keyword>
<keyword id="KW-1185">Reference proteome</keyword>
<keyword id="KW-0809">Transit peptide</keyword>
<keyword id="KW-0813">Transport</keyword>
<organism>
    <name type="scientific">Macaca fascicularis</name>
    <name type="common">Crab-eating macaque</name>
    <name type="synonym">Cynomolgus monkey</name>
    <dbReference type="NCBI Taxonomy" id="9541"/>
    <lineage>
        <taxon>Eukaryota</taxon>
        <taxon>Metazoa</taxon>
        <taxon>Chordata</taxon>
        <taxon>Craniata</taxon>
        <taxon>Vertebrata</taxon>
        <taxon>Euteleostomi</taxon>
        <taxon>Mammalia</taxon>
        <taxon>Eutheria</taxon>
        <taxon>Euarchontoglires</taxon>
        <taxon>Primates</taxon>
        <taxon>Haplorrhini</taxon>
        <taxon>Catarrhini</taxon>
        <taxon>Cercopithecidae</taxon>
        <taxon>Cercopithecinae</taxon>
        <taxon>Macaca</taxon>
    </lineage>
</organism>
<protein>
    <recommendedName>
        <fullName evidence="3">Frataxin, mitochondrial</fullName>
        <shortName>Fxn</shortName>
        <ecNumber evidence="3">1.16.3.1</ecNumber>
    </recommendedName>
    <component>
        <recommendedName>
            <fullName>Frataxin intermediate form</fullName>
        </recommendedName>
    </component>
    <component>
        <recommendedName>
            <fullName>Frataxin mature form</fullName>
        </recommendedName>
    </component>
    <component>
        <recommendedName>
            <fullName evidence="3">Extramitochondrial frataxin</fullName>
        </recommendedName>
    </component>
</protein>
<feature type="transit peptide" description="Mitochondrion" evidence="1">
    <location>
        <begin position="1"/>
        <end position="41"/>
    </location>
</feature>
<feature type="chain" id="PRO_0000010131" description="Frataxin intermediate form">
    <location>
        <begin position="42"/>
        <end position="210"/>
    </location>
</feature>
<feature type="chain" id="PRO_0000456948" description="Extramitochondrial frataxin" evidence="3">
    <location>
        <begin position="81"/>
        <end position="210"/>
    </location>
</feature>
<feature type="chain" id="PRO_0000399389" description="Frataxin mature form" evidence="1">
    <location>
        <begin position="81"/>
        <end position="210"/>
    </location>
</feature>
<feature type="sequence conflict" description="In Ref. 1; BAC20589." evidence="5" ref="1">
    <original>A</original>
    <variation>T</variation>
    <location>
        <position position="25"/>
    </location>
</feature>
<feature type="sequence conflict" description="In Ref. 1; BAC20589." evidence="5" ref="1">
    <original>C</original>
    <variation>R</variation>
    <location>
        <position position="50"/>
    </location>
</feature>
<feature type="sequence conflict" description="In Ref. 1; BAC20589." evidence="5" ref="1">
    <original>W</original>
    <variation>R</variation>
    <location>
        <position position="168"/>
    </location>
</feature>
<gene>
    <name evidence="3" type="primary">FXN</name>
    <name type="synonym">FRDA1</name>
    <name type="ORF">QnpA-13971</name>
</gene>
<accession>Q8HXX9</accession>
<accession>A0A2K5VX49</accession>
<accession>G7PSH7</accession>
<name>FRDA_MACFA</name>
<comment type="function">
    <molecule>Frataxin mature form</molecule>
    <text evidence="3 4">Functions as an activator of persulfide transfer to the scaffoding protein ISCU as component of the core iron-sulfur cluster (ISC) assembly complex and participates to the [2Fe-2S] cluster assembly. Accelerates sulfur transfer from NFS1 persulfide intermediate to ISCU and to small thiols such as L-cysteine and glutathione leading to persulfuration of these thiols and ultimately sulfide release. Binds ferrous ion and is released from FXN upon the addition of both L-cysteine and reduced FDX2 during [2Fe-2S] cluster assembly (By similarity). The core iron-sulfur cluster (ISC) assembly complex is involved in the de novo synthesis of a [2Fe-2S] cluster, the first step of the mitochondrial iron-sulfur protein biogenesis. This process is initiated by the cysteine desulfurase complex (NFS1:LYRM4:NDUFAB1) that produces persulfide which is delivered on the scaffold protein ISCU in a FXN-dependent manner. Then this complex is stabilized by FDX2 which provides reducing equivalents to accomplish the [2Fe-2S] cluster assembly. Finally, the [2Fe-2S] cluster is transferred from ISCU to chaperone proteins, including HSCB, HSPA9 and GLRX5 (By similarity). May play a role in the protection against iron-catalyzed oxidative stress through its ability to catalyze the oxidation of Fe(2+) to Fe(3+); the oligomeric form but not the monomeric form has in vitro ferroxidase activity. May be able to store large amounts of iron in the form of a ferrihydrite mineral by oligomerization; however, the physiological relevance is unsure as reports are conflicting and the function has only been shown using heterologous overexpression systems. May function as an iron chaperone protein that protects the aconitase [4Fe-4S]2+ cluster from disassembly and promotes enzyme reactivation. May play a role as a high affinity iron binding partner for FECH that is capable of both delivering iron to ferrochelatase and mediating the terminal step in mitochondrial heme biosynthesis (By similarity).</text>
</comment>
<comment type="function">
    <molecule>Extramitochondrial frataxin</molecule>
    <text evidence="3">Modulates the RNA-binding activity of ACO1. May be involved in the cytoplasmic iron-sulfur protein biogenesis. May contribute to oxidative stress resistance and overall cell survival.</text>
</comment>
<comment type="catalytic activity">
    <molecule>Frataxin mature form</molecule>
    <reaction evidence="3">
        <text>4 Fe(2+) + O2 + 4 H(+) = 4 Fe(3+) + 2 H2O</text>
        <dbReference type="Rhea" id="RHEA:11148"/>
        <dbReference type="ChEBI" id="CHEBI:15377"/>
        <dbReference type="ChEBI" id="CHEBI:15378"/>
        <dbReference type="ChEBI" id="CHEBI:15379"/>
        <dbReference type="ChEBI" id="CHEBI:29033"/>
        <dbReference type="ChEBI" id="CHEBI:29034"/>
        <dbReference type="EC" id="1.16.3.1"/>
    </reaction>
</comment>
<comment type="subunit">
    <molecule>Frataxin mature form</molecule>
    <text evidence="2 3">Component of the mitochondrial core iron-sulfur cluster (ISC) complex composed of NFS1, LYRM4, NDUFAB1, ISCU, FXN, and FDX2; this complex is a heterohexamer containing two copies of each monomer. Homodimer. Monomer (probable predominant form). Oligomer. Monomers and polymeric aggregates of &gt;1 MDa have been isolated from mitochondria. A small fraction of heterologous overexpressed recombinant frataxin forms high-molecular weight aggregates that incorporate iron. Interacts with LYRM4. Interacts (via ferrous form) with ISCU; the interaction is possible when both are bound to the dimeric form of the cysteine desulfurase complex (NFS1:LYRM4) and the interaction enhances FXN interaction to the dimeric form of the cysteine desulfurase complex (NFS1:LYRM4) (By similarity). Interacts with FECH; one iron-bound FXN monomer seems to interact with a FECH homodimer. Interacts with SDHA and SDHB (By similarity). Interacts with ACO2; the interaction is dependent on citrate (By similarity). Interacts with HSPA9 (By similarity).</text>
</comment>
<comment type="subunit">
    <molecule>Extramitochondrial frataxin</molecule>
    <text evidence="3">Interacts with ACO1. Interacts with ISCU (cytoplasmic form).</text>
</comment>
<comment type="subcellular location">
    <molecule>Frataxin mature form</molecule>
    <subcellularLocation>
        <location evidence="3">Mitochondrion</location>
    </subcellularLocation>
</comment>
<comment type="subcellular location">
    <molecule>Extramitochondrial frataxin</molecule>
    <subcellularLocation>
        <location evidence="3">Cytoplasm</location>
        <location evidence="3">Cytosol</location>
    </subcellularLocation>
</comment>
<comment type="PTM">
    <molecule>Frataxin mature form</molecule>
    <text evidence="3">Processed in two steps by mitochondrial processing peptidase (MPP). MPP first cleaves the precursor to intermediate form and subsequently converts the intermediate to yield frataxin mature form (frataxin(81-210)) which is the predominant form. The additional forms, frataxin(56-210) and frataxin(78-210), seem to be produced when the normal maturation process is impaired; their physiological relevance is unsure.</text>
</comment>
<comment type="similarity">
    <text evidence="5">Belongs to the frataxin family.</text>
</comment>
<proteinExistence type="evidence at transcript level"/>
<sequence>MWTFGRRAVAGLLASPSPAQAQTLARAPRLAELAQLCSRRGLRTGINATCTTHHTSSNLRGLNQIRNVKRQSVYLMNLRKSGTLGHPGSLDDTTYERLAEETLDSLAEFFEDLADKPYTFEDYDVSFGSGVLTVKLGGDLGTYVINKQTPNKQIWLSSPSSGPKRYDWTGKNWVYSHDGVSLHELLGAELTKALKTKLDLSSLAYSGKDA</sequence>
<dbReference type="EC" id="1.16.3.1" evidence="3"/>
<dbReference type="EMBL" id="AB083310">
    <property type="protein sequence ID" value="BAC20589.1"/>
    <property type="molecule type" value="mRNA"/>
</dbReference>
<dbReference type="EMBL" id="CM001290">
    <property type="protein sequence ID" value="EHH57443.1"/>
    <property type="molecule type" value="Genomic_DNA"/>
</dbReference>
<dbReference type="RefSeq" id="NP_001271967.1">
    <property type="nucleotide sequence ID" value="NM_001285038.1"/>
</dbReference>
<dbReference type="SMR" id="Q8HXX9"/>
<dbReference type="STRING" id="9541.ENSMFAP00000029296"/>
<dbReference type="VEuPathDB" id="HostDB:ENSMFAG00000041923"/>
<dbReference type="eggNOG" id="KOG3413">
    <property type="taxonomic scope" value="Eukaryota"/>
</dbReference>
<dbReference type="Proteomes" id="UP000009130">
    <property type="component" value="Chromosome 15"/>
</dbReference>
<dbReference type="Proteomes" id="UP000233100">
    <property type="component" value="Chromosome 15"/>
</dbReference>
<dbReference type="Bgee" id="ENSMFAG00000041923">
    <property type="expression patterns" value="Expressed in bone marrow and 13 other cell types or tissues"/>
</dbReference>
<dbReference type="GO" id="GO:0099128">
    <property type="term" value="C:mitochondrial [2Fe-2S] assembly complex"/>
    <property type="evidence" value="ECO:0000250"/>
    <property type="project" value="UniProtKB"/>
</dbReference>
<dbReference type="GO" id="GO:0005739">
    <property type="term" value="C:mitochondrion"/>
    <property type="evidence" value="ECO:0000250"/>
    <property type="project" value="UniProtKB"/>
</dbReference>
<dbReference type="GO" id="GO:0051537">
    <property type="term" value="F:2 iron, 2 sulfur cluster binding"/>
    <property type="evidence" value="ECO:0007669"/>
    <property type="project" value="TreeGrafter"/>
</dbReference>
<dbReference type="GO" id="GO:0008199">
    <property type="term" value="F:ferric iron binding"/>
    <property type="evidence" value="ECO:0007669"/>
    <property type="project" value="InterPro"/>
</dbReference>
<dbReference type="GO" id="GO:0008198">
    <property type="term" value="F:ferrous iron binding"/>
    <property type="evidence" value="ECO:0007669"/>
    <property type="project" value="TreeGrafter"/>
</dbReference>
<dbReference type="GO" id="GO:0004322">
    <property type="term" value="F:ferroxidase activity"/>
    <property type="evidence" value="ECO:0007669"/>
    <property type="project" value="UniProtKB-EC"/>
</dbReference>
<dbReference type="GO" id="GO:0034986">
    <property type="term" value="F:iron chaperone activity"/>
    <property type="evidence" value="ECO:0007669"/>
    <property type="project" value="TreeGrafter"/>
</dbReference>
<dbReference type="GO" id="GO:0044571">
    <property type="term" value="P:[2Fe-2S] cluster assembly"/>
    <property type="evidence" value="ECO:0000250"/>
    <property type="project" value="UniProtKB"/>
</dbReference>
<dbReference type="GO" id="GO:0044572">
    <property type="term" value="P:[4Fe-4S] cluster assembly"/>
    <property type="evidence" value="ECO:0000250"/>
    <property type="project" value="UniProtKB"/>
</dbReference>
<dbReference type="GO" id="GO:0006783">
    <property type="term" value="P:heme biosynthetic process"/>
    <property type="evidence" value="ECO:0007669"/>
    <property type="project" value="UniProtKB-KW"/>
</dbReference>
<dbReference type="GO" id="GO:0006879">
    <property type="term" value="P:intracellular iron ion homeostasis"/>
    <property type="evidence" value="ECO:0007669"/>
    <property type="project" value="UniProtKB-KW"/>
</dbReference>
<dbReference type="GO" id="GO:0006826">
    <property type="term" value="P:iron ion transport"/>
    <property type="evidence" value="ECO:0007669"/>
    <property type="project" value="UniProtKB-KW"/>
</dbReference>
<dbReference type="CDD" id="cd00503">
    <property type="entry name" value="Frataxin"/>
    <property type="match status" value="1"/>
</dbReference>
<dbReference type="FunFam" id="3.30.920.10:FF:000002">
    <property type="entry name" value="Frataxin, mitochondrial"/>
    <property type="match status" value="1"/>
</dbReference>
<dbReference type="Gene3D" id="3.30.920.10">
    <property type="entry name" value="Frataxin/CyaY"/>
    <property type="match status" value="1"/>
</dbReference>
<dbReference type="InterPro" id="IPR017789">
    <property type="entry name" value="Frataxin"/>
</dbReference>
<dbReference type="InterPro" id="IPR002908">
    <property type="entry name" value="Frataxin/CyaY"/>
</dbReference>
<dbReference type="InterPro" id="IPR036524">
    <property type="entry name" value="Frataxin/CyaY_sf"/>
</dbReference>
<dbReference type="InterPro" id="IPR020895">
    <property type="entry name" value="Frataxin_CS"/>
</dbReference>
<dbReference type="NCBIfam" id="TIGR03421">
    <property type="entry name" value="FeS_CyaY"/>
    <property type="match status" value="1"/>
</dbReference>
<dbReference type="NCBIfam" id="TIGR03422">
    <property type="entry name" value="mito_frataxin"/>
    <property type="match status" value="1"/>
</dbReference>
<dbReference type="PANTHER" id="PTHR16821">
    <property type="entry name" value="FRATAXIN"/>
    <property type="match status" value="1"/>
</dbReference>
<dbReference type="PANTHER" id="PTHR16821:SF2">
    <property type="entry name" value="FRATAXIN, MITOCHONDRIAL"/>
    <property type="match status" value="1"/>
</dbReference>
<dbReference type="Pfam" id="PF01491">
    <property type="entry name" value="Frataxin_Cyay"/>
    <property type="match status" value="1"/>
</dbReference>
<dbReference type="PRINTS" id="PR00904">
    <property type="entry name" value="FRATAXIN"/>
</dbReference>
<dbReference type="SMART" id="SM01219">
    <property type="entry name" value="Frataxin_Cyay"/>
    <property type="match status" value="1"/>
</dbReference>
<dbReference type="SUPFAM" id="SSF55387">
    <property type="entry name" value="Frataxin/Nqo15-like"/>
    <property type="match status" value="1"/>
</dbReference>
<dbReference type="PROSITE" id="PS01344">
    <property type="entry name" value="FRATAXIN_1"/>
    <property type="match status" value="1"/>
</dbReference>
<dbReference type="PROSITE" id="PS50810">
    <property type="entry name" value="FRATAXIN_2"/>
    <property type="match status" value="1"/>
</dbReference>